<gene>
    <name type="primary">MT-ND6</name>
    <name type="synonym">MTND6</name>
    <name type="synonym">NADH6</name>
    <name type="synonym">ND6</name>
</gene>
<dbReference type="EC" id="7.1.1.2" evidence="1"/>
<dbReference type="EMBL" id="V00654">
    <property type="protein sequence ID" value="CAA24006.1"/>
    <property type="molecule type" value="Genomic_DNA"/>
</dbReference>
<dbReference type="EMBL" id="AF490528">
    <property type="protein sequence ID" value="AAM08328.1"/>
    <property type="molecule type" value="Genomic_DNA"/>
</dbReference>
<dbReference type="EMBL" id="AF490529">
    <property type="protein sequence ID" value="AAM08341.1"/>
    <property type="molecule type" value="Genomic_DNA"/>
</dbReference>
<dbReference type="EMBL" id="AF493541">
    <property type="protein sequence ID" value="AAM12800.1"/>
    <property type="molecule type" value="Genomic_DNA"/>
</dbReference>
<dbReference type="EMBL" id="AF493542">
    <property type="protein sequence ID" value="AAM12813.1"/>
    <property type="molecule type" value="Genomic_DNA"/>
</dbReference>
<dbReference type="PIR" id="A00456">
    <property type="entry name" value="DEBON6"/>
</dbReference>
<dbReference type="RefSeq" id="YP_209216.1">
    <property type="nucleotide sequence ID" value="NC_006853.1"/>
</dbReference>
<dbReference type="PDB" id="5LC5">
    <property type="method" value="EM"/>
    <property type="resolution" value="4.35 A"/>
    <property type="chains" value="J=2-172"/>
</dbReference>
<dbReference type="PDB" id="5LDW">
    <property type="method" value="EM"/>
    <property type="resolution" value="4.27 A"/>
    <property type="chains" value="J=1-175"/>
</dbReference>
<dbReference type="PDB" id="5LDX">
    <property type="method" value="EM"/>
    <property type="resolution" value="5.60 A"/>
    <property type="chains" value="J=1-175"/>
</dbReference>
<dbReference type="PDB" id="5O31">
    <property type="method" value="EM"/>
    <property type="resolution" value="4.13 A"/>
    <property type="chains" value="J=1-175"/>
</dbReference>
<dbReference type="PDB" id="7DGQ">
    <property type="method" value="EM"/>
    <property type="resolution" value="5.00 A"/>
    <property type="chains" value="7=1-175"/>
</dbReference>
<dbReference type="PDB" id="7DGR">
    <property type="method" value="EM"/>
    <property type="resolution" value="4.60 A"/>
    <property type="chains" value="7=1-175"/>
</dbReference>
<dbReference type="PDB" id="7DGS">
    <property type="method" value="EM"/>
    <property type="resolution" value="7.80 A"/>
    <property type="chains" value="7=1-175"/>
</dbReference>
<dbReference type="PDB" id="7DGZ">
    <property type="method" value="EM"/>
    <property type="resolution" value="3.80 A"/>
    <property type="chains" value="7=1-175"/>
</dbReference>
<dbReference type="PDB" id="7DH0">
    <property type="method" value="EM"/>
    <property type="resolution" value="4.20 A"/>
    <property type="chains" value="7=1-175"/>
</dbReference>
<dbReference type="PDB" id="7DKF">
    <property type="method" value="EM"/>
    <property type="resolution" value="8.30 A"/>
    <property type="chains" value="72=1-175"/>
</dbReference>
<dbReference type="PDB" id="7QSD">
    <property type="method" value="EM"/>
    <property type="resolution" value="3.10 A"/>
    <property type="chains" value="J=1-175"/>
</dbReference>
<dbReference type="PDB" id="7QSK">
    <property type="method" value="EM"/>
    <property type="resolution" value="2.84 A"/>
    <property type="chains" value="J=1-175"/>
</dbReference>
<dbReference type="PDB" id="7QSL">
    <property type="method" value="EM"/>
    <property type="resolution" value="2.76 A"/>
    <property type="chains" value="J=1-175"/>
</dbReference>
<dbReference type="PDB" id="7QSM">
    <property type="method" value="EM"/>
    <property type="resolution" value="2.30 A"/>
    <property type="chains" value="J=1-175"/>
</dbReference>
<dbReference type="PDB" id="7QSN">
    <property type="method" value="EM"/>
    <property type="resolution" value="2.81 A"/>
    <property type="chains" value="J=1-175"/>
</dbReference>
<dbReference type="PDB" id="7QSO">
    <property type="method" value="EM"/>
    <property type="resolution" value="3.02 A"/>
    <property type="chains" value="J=1-175"/>
</dbReference>
<dbReference type="PDB" id="7R41">
    <property type="method" value="EM"/>
    <property type="resolution" value="2.30 A"/>
    <property type="chains" value="J=1-175"/>
</dbReference>
<dbReference type="PDB" id="7R42">
    <property type="method" value="EM"/>
    <property type="resolution" value="2.30 A"/>
    <property type="chains" value="J=1-175"/>
</dbReference>
<dbReference type="PDB" id="7R43">
    <property type="method" value="EM"/>
    <property type="resolution" value="2.40 A"/>
    <property type="chains" value="J=1-175"/>
</dbReference>
<dbReference type="PDB" id="7R44">
    <property type="method" value="EM"/>
    <property type="resolution" value="2.40 A"/>
    <property type="chains" value="J=1-175"/>
</dbReference>
<dbReference type="PDB" id="7R45">
    <property type="method" value="EM"/>
    <property type="resolution" value="2.40 A"/>
    <property type="chains" value="J=1-175"/>
</dbReference>
<dbReference type="PDB" id="7R46">
    <property type="method" value="EM"/>
    <property type="resolution" value="2.40 A"/>
    <property type="chains" value="J=1-175"/>
</dbReference>
<dbReference type="PDB" id="7R47">
    <property type="method" value="EM"/>
    <property type="resolution" value="2.30 A"/>
    <property type="chains" value="J=1-175"/>
</dbReference>
<dbReference type="PDB" id="7R48">
    <property type="method" value="EM"/>
    <property type="resolution" value="2.30 A"/>
    <property type="chains" value="J=1-175"/>
</dbReference>
<dbReference type="PDB" id="7R4C">
    <property type="method" value="EM"/>
    <property type="resolution" value="2.30 A"/>
    <property type="chains" value="J=1-175"/>
</dbReference>
<dbReference type="PDB" id="7R4D">
    <property type="method" value="EM"/>
    <property type="resolution" value="2.30 A"/>
    <property type="chains" value="J=1-175"/>
</dbReference>
<dbReference type="PDB" id="7R4F">
    <property type="method" value="EM"/>
    <property type="resolution" value="2.40 A"/>
    <property type="chains" value="J=1-175"/>
</dbReference>
<dbReference type="PDB" id="7R4G">
    <property type="method" value="EM"/>
    <property type="resolution" value="2.50 A"/>
    <property type="chains" value="J=1-175"/>
</dbReference>
<dbReference type="PDB" id="8Q0A">
    <property type="method" value="EM"/>
    <property type="resolution" value="3.10 A"/>
    <property type="chains" value="J=1-175"/>
</dbReference>
<dbReference type="PDB" id="8Q0F">
    <property type="method" value="EM"/>
    <property type="resolution" value="3.10 A"/>
    <property type="chains" value="J=1-175"/>
</dbReference>
<dbReference type="PDB" id="8Q0J">
    <property type="method" value="EM"/>
    <property type="resolution" value="3.80 A"/>
    <property type="chains" value="J=1-175"/>
</dbReference>
<dbReference type="PDB" id="8Q0M">
    <property type="method" value="EM"/>
    <property type="resolution" value="3.10 A"/>
    <property type="chains" value="J=1-175"/>
</dbReference>
<dbReference type="PDB" id="8Q0O">
    <property type="method" value="EM"/>
    <property type="resolution" value="3.10 A"/>
    <property type="chains" value="J=1-175"/>
</dbReference>
<dbReference type="PDB" id="8Q0Q">
    <property type="method" value="EM"/>
    <property type="resolution" value="3.60 A"/>
    <property type="chains" value="J=1-175"/>
</dbReference>
<dbReference type="PDB" id="8Q1P">
    <property type="method" value="EM"/>
    <property type="resolution" value="2.90 A"/>
    <property type="chains" value="J=1-175"/>
</dbReference>
<dbReference type="PDB" id="8Q1U">
    <property type="method" value="EM"/>
    <property type="resolution" value="3.30 A"/>
    <property type="chains" value="J=1-175"/>
</dbReference>
<dbReference type="PDB" id="8Q1Y">
    <property type="method" value="EM"/>
    <property type="resolution" value="2.60 A"/>
    <property type="chains" value="J=1-175"/>
</dbReference>
<dbReference type="PDB" id="8Q25">
    <property type="method" value="EM"/>
    <property type="resolution" value="2.80 A"/>
    <property type="chains" value="J=1-175"/>
</dbReference>
<dbReference type="PDB" id="8Q45">
    <property type="method" value="EM"/>
    <property type="resolution" value="2.70 A"/>
    <property type="chains" value="J=1-175"/>
</dbReference>
<dbReference type="PDB" id="8Q46">
    <property type="method" value="EM"/>
    <property type="resolution" value="2.60 A"/>
    <property type="chains" value="J=1-175"/>
</dbReference>
<dbReference type="PDB" id="8Q47">
    <property type="method" value="EM"/>
    <property type="resolution" value="2.90 A"/>
    <property type="chains" value="J=1-175"/>
</dbReference>
<dbReference type="PDB" id="8Q48">
    <property type="method" value="EM"/>
    <property type="resolution" value="2.50 A"/>
    <property type="chains" value="J=1-175"/>
</dbReference>
<dbReference type="PDB" id="8Q49">
    <property type="method" value="EM"/>
    <property type="resolution" value="2.60 A"/>
    <property type="chains" value="J=1-175"/>
</dbReference>
<dbReference type="PDB" id="8Q4A">
    <property type="method" value="EM"/>
    <property type="resolution" value="2.60 A"/>
    <property type="chains" value="J=1-175"/>
</dbReference>
<dbReference type="PDBsum" id="5LC5"/>
<dbReference type="PDBsum" id="5LDW"/>
<dbReference type="PDBsum" id="5LDX"/>
<dbReference type="PDBsum" id="5O31"/>
<dbReference type="PDBsum" id="7DGQ"/>
<dbReference type="PDBsum" id="7DGR"/>
<dbReference type="PDBsum" id="7DGS"/>
<dbReference type="PDBsum" id="7DGZ"/>
<dbReference type="PDBsum" id="7DH0"/>
<dbReference type="PDBsum" id="7DKF"/>
<dbReference type="PDBsum" id="7QSD"/>
<dbReference type="PDBsum" id="7QSK"/>
<dbReference type="PDBsum" id="7QSL"/>
<dbReference type="PDBsum" id="7QSM"/>
<dbReference type="PDBsum" id="7QSN"/>
<dbReference type="PDBsum" id="7QSO"/>
<dbReference type="PDBsum" id="7R41"/>
<dbReference type="PDBsum" id="7R42"/>
<dbReference type="PDBsum" id="7R43"/>
<dbReference type="PDBsum" id="7R44"/>
<dbReference type="PDBsum" id="7R45"/>
<dbReference type="PDBsum" id="7R46"/>
<dbReference type="PDBsum" id="7R47"/>
<dbReference type="PDBsum" id="7R48"/>
<dbReference type="PDBsum" id="7R4C"/>
<dbReference type="PDBsum" id="7R4D"/>
<dbReference type="PDBsum" id="7R4F"/>
<dbReference type="PDBsum" id="7R4G"/>
<dbReference type="PDBsum" id="8Q0A"/>
<dbReference type="PDBsum" id="8Q0F"/>
<dbReference type="PDBsum" id="8Q0J"/>
<dbReference type="PDBsum" id="8Q0M"/>
<dbReference type="PDBsum" id="8Q0O"/>
<dbReference type="PDBsum" id="8Q0Q"/>
<dbReference type="PDBsum" id="8Q1P"/>
<dbReference type="PDBsum" id="8Q1U"/>
<dbReference type="PDBsum" id="8Q1Y"/>
<dbReference type="PDBsum" id="8Q25"/>
<dbReference type="PDBsum" id="8Q45"/>
<dbReference type="PDBsum" id="8Q46"/>
<dbReference type="PDBsum" id="8Q47"/>
<dbReference type="PDBsum" id="8Q48"/>
<dbReference type="PDBsum" id="8Q49"/>
<dbReference type="PDBsum" id="8Q4A"/>
<dbReference type="EMDB" id="EMD-14127"/>
<dbReference type="EMDB" id="EMD-14132"/>
<dbReference type="EMDB" id="EMD-14133"/>
<dbReference type="EMDB" id="EMD-14134"/>
<dbReference type="EMDB" id="EMD-14139"/>
<dbReference type="EMDB" id="EMD-14140"/>
<dbReference type="EMDB" id="EMD-14251"/>
<dbReference type="EMDB" id="EMD-14256"/>
<dbReference type="EMDB" id="EMD-14261"/>
<dbReference type="EMDB" id="EMD-14266"/>
<dbReference type="EMDB" id="EMD-14272"/>
<dbReference type="EMDB" id="EMD-14277"/>
<dbReference type="EMDB" id="EMD-14282"/>
<dbReference type="EMDB" id="EMD-14287"/>
<dbReference type="EMDB" id="EMD-14292"/>
<dbReference type="EMDB" id="EMD-14297"/>
<dbReference type="EMDB" id="EMD-14302"/>
<dbReference type="EMDB" id="EMD-14307"/>
<dbReference type="EMDB" id="EMD-18051"/>
<dbReference type="EMDB" id="EMD-18052"/>
<dbReference type="EMDB" id="EMD-18054"/>
<dbReference type="EMDB" id="EMD-18055"/>
<dbReference type="EMDB" id="EMD-18057"/>
<dbReference type="EMDB" id="EMD-18059"/>
<dbReference type="EMDB" id="EMD-18066"/>
<dbReference type="EMDB" id="EMD-18067"/>
<dbReference type="EMDB" id="EMD-18068"/>
<dbReference type="EMDB" id="EMD-18069"/>
<dbReference type="EMDB" id="EMD-18138"/>
<dbReference type="EMDB" id="EMD-18139"/>
<dbReference type="EMDB" id="EMD-18140"/>
<dbReference type="EMDB" id="EMD-18141"/>
<dbReference type="EMDB" id="EMD-18142"/>
<dbReference type="EMDB" id="EMD-18143"/>
<dbReference type="EMDB" id="EMD-30673"/>
<dbReference type="EMDB" id="EMD-30674"/>
<dbReference type="EMDB" id="EMD-30675"/>
<dbReference type="EMDB" id="EMD-30676"/>
<dbReference type="EMDB" id="EMD-30677"/>
<dbReference type="EMDB" id="EMD-30706"/>
<dbReference type="EMDB" id="EMD-3731"/>
<dbReference type="EMDB" id="EMD-4032"/>
<dbReference type="EMDB" id="EMD-4040"/>
<dbReference type="EMDB" id="EMD-4041"/>
<dbReference type="SMR" id="P03924"/>
<dbReference type="CORUM" id="P03924"/>
<dbReference type="DIP" id="DIP-62098N"/>
<dbReference type="FunCoup" id="P03924">
    <property type="interactions" value="198"/>
</dbReference>
<dbReference type="STRING" id="9913.ENSBTAP00000053156"/>
<dbReference type="TCDB" id="3.D.1.6.1">
    <property type="family name" value="the h+ or na+-translocating nadh dehydrogenase (ndh) family"/>
</dbReference>
<dbReference type="PaxDb" id="9913-ENSBTAP00000053156"/>
<dbReference type="Ensembl" id="ENSBTAT00000060562.1">
    <property type="protein sequence ID" value="ENSBTAP00000053156.1"/>
    <property type="gene ID" value="ENSBTAG00000043546.1"/>
</dbReference>
<dbReference type="GeneID" id="3283888"/>
<dbReference type="KEGG" id="bta:3283888"/>
<dbReference type="CTD" id="4541"/>
<dbReference type="VEuPathDB" id="HostDB:ENSBTAG00000043546"/>
<dbReference type="VGNC" id="VGNC:55745">
    <property type="gene designation" value="MT-ND6"/>
</dbReference>
<dbReference type="eggNOG" id="ENOG502S2Q2">
    <property type="taxonomic scope" value="Eukaryota"/>
</dbReference>
<dbReference type="GeneTree" id="ENSGT00390000003988"/>
<dbReference type="HOGENOM" id="CLU_129718_0_0_1"/>
<dbReference type="InParanoid" id="P03924"/>
<dbReference type="OMA" id="WVIYDTG"/>
<dbReference type="OrthoDB" id="9837654at2759"/>
<dbReference type="TreeFam" id="TF343324"/>
<dbReference type="Reactome" id="R-BTA-611105">
    <property type="pathway name" value="Respiratory electron transport"/>
</dbReference>
<dbReference type="Reactome" id="R-BTA-6799198">
    <property type="pathway name" value="Complex I biogenesis"/>
</dbReference>
<dbReference type="Proteomes" id="UP000009136">
    <property type="component" value="Mitochondrion MT"/>
</dbReference>
<dbReference type="Bgee" id="ENSBTAG00000043546">
    <property type="expression patterns" value="Expressed in prefrontal cortex and 103 other cell types or tissues"/>
</dbReference>
<dbReference type="GO" id="GO:0005743">
    <property type="term" value="C:mitochondrial inner membrane"/>
    <property type="evidence" value="ECO:0000314"/>
    <property type="project" value="UniProtKB"/>
</dbReference>
<dbReference type="GO" id="GO:0005739">
    <property type="term" value="C:mitochondrion"/>
    <property type="evidence" value="ECO:0000318"/>
    <property type="project" value="GO_Central"/>
</dbReference>
<dbReference type="GO" id="GO:0045271">
    <property type="term" value="C:respiratory chain complex I"/>
    <property type="evidence" value="ECO:0007669"/>
    <property type="project" value="Ensembl"/>
</dbReference>
<dbReference type="GO" id="GO:0008137">
    <property type="term" value="F:NADH dehydrogenase (ubiquinone) activity"/>
    <property type="evidence" value="ECO:0000250"/>
    <property type="project" value="UniProtKB"/>
</dbReference>
<dbReference type="GO" id="GO:0006120">
    <property type="term" value="P:mitochondrial electron transport, NADH to ubiquinone"/>
    <property type="evidence" value="ECO:0000250"/>
    <property type="project" value="UniProtKB"/>
</dbReference>
<dbReference type="GO" id="GO:0032981">
    <property type="term" value="P:mitochondrial respiratory chain complex I assembly"/>
    <property type="evidence" value="ECO:0000250"/>
    <property type="project" value="UniProtKB"/>
</dbReference>
<dbReference type="Gene3D" id="1.20.120.1200">
    <property type="entry name" value="NADH-ubiquinone/plastoquinone oxidoreductase chain 6, subunit NuoJ"/>
    <property type="match status" value="1"/>
</dbReference>
<dbReference type="InterPro" id="IPR050269">
    <property type="entry name" value="ComplexI_Subunit6"/>
</dbReference>
<dbReference type="InterPro" id="IPR001457">
    <property type="entry name" value="NADH_UbQ/plastoQ_OxRdtase_su6"/>
</dbReference>
<dbReference type="InterPro" id="IPR042106">
    <property type="entry name" value="Nuo/plastoQ_OxRdtase_6_NuoJ"/>
</dbReference>
<dbReference type="PANTHER" id="PTHR11435">
    <property type="entry name" value="NADH UBIQUINONE OXIDOREDUCTASE SUBUNIT ND6"/>
    <property type="match status" value="1"/>
</dbReference>
<dbReference type="PANTHER" id="PTHR11435:SF1">
    <property type="entry name" value="NADH-UBIQUINONE OXIDOREDUCTASE CHAIN 6"/>
    <property type="match status" value="1"/>
</dbReference>
<dbReference type="Pfam" id="PF00499">
    <property type="entry name" value="Oxidored_q3"/>
    <property type="match status" value="1"/>
</dbReference>
<evidence type="ECO:0000250" key="1">
    <source>
        <dbReference type="UniProtKB" id="P03923"/>
    </source>
</evidence>
<evidence type="ECO:0000255" key="2"/>
<evidence type="ECO:0000269" key="3">
    <source>
    </source>
</evidence>
<evidence type="ECO:0000305" key="4"/>
<evidence type="ECO:0000312" key="5">
    <source>
        <dbReference type="Proteomes" id="UP000009136"/>
    </source>
</evidence>
<evidence type="ECO:0007829" key="6">
    <source>
        <dbReference type="PDB" id="7QSM"/>
    </source>
</evidence>
<evidence type="ECO:0007829" key="7">
    <source>
        <dbReference type="PDB" id="8Q48"/>
    </source>
</evidence>
<keyword id="KW-0002">3D-structure</keyword>
<keyword id="KW-0249">Electron transport</keyword>
<keyword id="KW-0472">Membrane</keyword>
<keyword id="KW-0496">Mitochondrion</keyword>
<keyword id="KW-0999">Mitochondrion inner membrane</keyword>
<keyword id="KW-0520">NAD</keyword>
<keyword id="KW-1185">Reference proteome</keyword>
<keyword id="KW-0679">Respiratory chain</keyword>
<keyword id="KW-1278">Translocase</keyword>
<keyword id="KW-0812">Transmembrane</keyword>
<keyword id="KW-1133">Transmembrane helix</keyword>
<keyword id="KW-0813">Transport</keyword>
<keyword id="KW-0830">Ubiquinone</keyword>
<accession>P03924</accession>
<name>NU6M_BOVIN</name>
<comment type="function">
    <text evidence="1">Core subunit of the mitochondrial membrane respiratory chain NADH dehydrogenase (Complex I) which catalyzes electron transfer from NADH through the respiratory chain, using ubiquinone as an electron acceptor. Essential for the catalytic activity and assembly of complex I.</text>
</comment>
<comment type="catalytic activity">
    <reaction evidence="1">
        <text>a ubiquinone + NADH + 5 H(+)(in) = a ubiquinol + NAD(+) + 4 H(+)(out)</text>
        <dbReference type="Rhea" id="RHEA:29091"/>
        <dbReference type="Rhea" id="RHEA-COMP:9565"/>
        <dbReference type="Rhea" id="RHEA-COMP:9566"/>
        <dbReference type="ChEBI" id="CHEBI:15378"/>
        <dbReference type="ChEBI" id="CHEBI:16389"/>
        <dbReference type="ChEBI" id="CHEBI:17976"/>
        <dbReference type="ChEBI" id="CHEBI:57540"/>
        <dbReference type="ChEBI" id="CHEBI:57945"/>
        <dbReference type="EC" id="7.1.1.2"/>
    </reaction>
</comment>
<comment type="subunit">
    <text evidence="3">Core subunit of respiratory chain NADH dehydrogenase (Complex I) which is composed of 45 different subunits.</text>
</comment>
<comment type="subcellular location">
    <subcellularLocation>
        <location evidence="3 4">Mitochondrion inner membrane</location>
        <topology evidence="2">Multi-pass membrane protein</topology>
    </subcellularLocation>
</comment>
<comment type="similarity">
    <text evidence="4">Belongs to the complex I subunit 6 family.</text>
</comment>
<sequence length="175" mass="19078">MMLYIVFILSVIFVMGFVGFSSKPSPIYGGLGLIVSGGVGCGIVLNFGGSFLGLMVFLIYLGGMMVVFGYTTAMATEQYPEIWLSNKAVLGAFVTGLLMEFFMVYYVLKDKEVEVVFEFNGLGDWVIYDTGDSGFFSEEAMGIAALYSYGTWLVIVTGWSLLIGVVVIMEITRGN</sequence>
<organism>
    <name type="scientific">Bos taurus</name>
    <name type="common">Bovine</name>
    <dbReference type="NCBI Taxonomy" id="9913"/>
    <lineage>
        <taxon>Eukaryota</taxon>
        <taxon>Metazoa</taxon>
        <taxon>Chordata</taxon>
        <taxon>Craniata</taxon>
        <taxon>Vertebrata</taxon>
        <taxon>Euteleostomi</taxon>
        <taxon>Mammalia</taxon>
        <taxon>Eutheria</taxon>
        <taxon>Laurasiatheria</taxon>
        <taxon>Artiodactyla</taxon>
        <taxon>Ruminantia</taxon>
        <taxon>Pecora</taxon>
        <taxon>Bovidae</taxon>
        <taxon>Bovinae</taxon>
        <taxon>Bos</taxon>
    </lineage>
</organism>
<protein>
    <recommendedName>
        <fullName>NADH-ubiquinone oxidoreductase chain 6</fullName>
        <ecNumber evidence="1">7.1.1.2</ecNumber>
    </recommendedName>
    <alternativeName>
        <fullName>NADH dehydrogenase subunit 6</fullName>
    </alternativeName>
</protein>
<feature type="chain" id="PRO_0000118248" description="NADH-ubiquinone oxidoreductase chain 6">
    <location>
        <begin position="1"/>
        <end position="175"/>
    </location>
</feature>
<feature type="transmembrane region" description="Helical" evidence="2">
    <location>
        <begin position="1"/>
        <end position="21"/>
    </location>
</feature>
<feature type="transmembrane region" description="Helical" evidence="2">
    <location>
        <begin position="25"/>
        <end position="45"/>
    </location>
</feature>
<feature type="transmembrane region" description="Helical" evidence="2">
    <location>
        <begin position="47"/>
        <end position="67"/>
    </location>
</feature>
<feature type="transmembrane region" description="Helical" evidence="2">
    <location>
        <begin position="88"/>
        <end position="108"/>
    </location>
</feature>
<feature type="transmembrane region" description="Helical" evidence="2">
    <location>
        <begin position="149"/>
        <end position="169"/>
    </location>
</feature>
<feature type="helix" evidence="6">
    <location>
        <begin position="2"/>
        <end position="4"/>
    </location>
</feature>
<feature type="helix" evidence="6">
    <location>
        <begin position="5"/>
        <end position="21"/>
    </location>
</feature>
<feature type="helix" evidence="6">
    <location>
        <begin position="26"/>
        <end position="45"/>
    </location>
</feature>
<feature type="turn" evidence="6">
    <location>
        <begin position="46"/>
        <end position="48"/>
    </location>
</feature>
<feature type="helix" evidence="6">
    <location>
        <begin position="50"/>
        <end position="59"/>
    </location>
</feature>
<feature type="turn" evidence="6">
    <location>
        <begin position="60"/>
        <end position="63"/>
    </location>
</feature>
<feature type="helix" evidence="6">
    <location>
        <begin position="64"/>
        <end position="75"/>
    </location>
</feature>
<feature type="turn" evidence="7">
    <location>
        <begin position="83"/>
        <end position="85"/>
    </location>
</feature>
<feature type="helix" evidence="6">
    <location>
        <begin position="87"/>
        <end position="109"/>
    </location>
</feature>
<feature type="strand" evidence="6">
    <location>
        <begin position="110"/>
        <end position="120"/>
    </location>
</feature>
<feature type="helix" evidence="6">
    <location>
        <begin position="124"/>
        <end position="127"/>
    </location>
</feature>
<feature type="strand" evidence="6">
    <location>
        <begin position="128"/>
        <end position="130"/>
    </location>
</feature>
<feature type="helix" evidence="6">
    <location>
        <begin position="138"/>
        <end position="144"/>
    </location>
</feature>
<feature type="turn" evidence="6">
    <location>
        <begin position="145"/>
        <end position="149"/>
    </location>
</feature>
<feature type="helix" evidence="6">
    <location>
        <begin position="151"/>
        <end position="173"/>
    </location>
</feature>
<reference key="1">
    <citation type="journal article" date="1982" name="J. Mol. Biol.">
        <title>Complete sequence of bovine mitochondrial DNA. Conserved features of the mammalian mitochondrial genome.</title>
        <authorList>
            <person name="Anderson S."/>
            <person name="de Bruijn M.H.L."/>
            <person name="Coulson A.R."/>
            <person name="Eperon I.C."/>
            <person name="Sanger F."/>
            <person name="Young I.G."/>
        </authorList>
    </citation>
    <scope>NUCLEOTIDE SEQUENCE [GENOMIC DNA]</scope>
    <source>
        <strain evidence="5">Hereford</strain>
        <tissue>Heart</tissue>
    </source>
</reference>
<reference key="2">
    <citation type="submission" date="2002-03" db="EMBL/GenBank/DDBJ databases">
        <title>Bos taurus mitochondrial protein coding regions.</title>
        <authorList>
            <person name="Wettstein P.J."/>
        </authorList>
    </citation>
    <scope>NUCLEOTIDE SEQUENCE [GENOMIC DNA]</scope>
    <source>
        <strain>65</strain>
        <strain>66</strain>
        <strain>D</strain>
        <strain>F</strain>
    </source>
</reference>
<reference key="3">
    <citation type="journal article" date="2014" name="Nature">
        <title>Architecture of mammalian respiratory complex I.</title>
        <authorList>
            <person name="Vinothkumar K.R."/>
            <person name="Zhu J."/>
            <person name="Hirst J."/>
        </authorList>
    </citation>
    <scope>SUBUNIT</scope>
    <scope>SUBCELLULAR LOCATION</scope>
</reference>
<proteinExistence type="evidence at protein level"/>
<geneLocation type="mitochondrion"/>